<name>SIM32_HUMAN</name>
<protein>
    <recommendedName>
        <fullName evidence="2">Small integral membrane protein 32</fullName>
    </recommendedName>
</protein>
<evidence type="ECO:0000255" key="1"/>
<evidence type="ECO:0000305" key="2"/>
<evidence type="ECO:0000312" key="3">
    <source>
        <dbReference type="HGNC" id="HGNC:53640"/>
    </source>
</evidence>
<proteinExistence type="inferred from homology"/>
<organism>
    <name type="scientific">Homo sapiens</name>
    <name type="common">Human</name>
    <dbReference type="NCBI Taxonomy" id="9606"/>
    <lineage>
        <taxon>Eukaryota</taxon>
        <taxon>Metazoa</taxon>
        <taxon>Chordata</taxon>
        <taxon>Craniata</taxon>
        <taxon>Vertebrata</taxon>
        <taxon>Euteleostomi</taxon>
        <taxon>Mammalia</taxon>
        <taxon>Eutheria</taxon>
        <taxon>Euarchontoglires</taxon>
        <taxon>Primates</taxon>
        <taxon>Haplorrhini</taxon>
        <taxon>Catarrhini</taxon>
        <taxon>Hominidae</taxon>
        <taxon>Homo</taxon>
    </lineage>
</organism>
<keyword id="KW-0472">Membrane</keyword>
<keyword id="KW-1185">Reference proteome</keyword>
<keyword id="KW-0812">Transmembrane</keyword>
<keyword id="KW-1133">Transmembrane helix</keyword>
<feature type="chain" id="PRO_0000443392" description="Small integral membrane protein 32">
    <location>
        <begin position="1"/>
        <end position="103"/>
    </location>
</feature>
<feature type="transmembrane region" description="Helical" evidence="1">
    <location>
        <begin position="55"/>
        <end position="75"/>
    </location>
</feature>
<reference key="1">
    <citation type="journal article" date="2004" name="Nature">
        <title>The DNA sequence and comparative analysis of human chromosome 5.</title>
        <authorList>
            <person name="Schmutz J."/>
            <person name="Martin J."/>
            <person name="Terry A."/>
            <person name="Couronne O."/>
            <person name="Grimwood J."/>
            <person name="Lowry S."/>
            <person name="Gordon L.A."/>
            <person name="Scott D."/>
            <person name="Xie G."/>
            <person name="Huang W."/>
            <person name="Hellsten U."/>
            <person name="Tran-Gyamfi M."/>
            <person name="She X."/>
            <person name="Prabhakar S."/>
            <person name="Aerts A."/>
            <person name="Altherr M."/>
            <person name="Bajorek E."/>
            <person name="Black S."/>
            <person name="Branscomb E."/>
            <person name="Caoile C."/>
            <person name="Challacombe J.F."/>
            <person name="Chan Y.M."/>
            <person name="Denys M."/>
            <person name="Detter J.C."/>
            <person name="Escobar J."/>
            <person name="Flowers D."/>
            <person name="Fotopulos D."/>
            <person name="Glavina T."/>
            <person name="Gomez M."/>
            <person name="Gonzales E."/>
            <person name="Goodstein D."/>
            <person name="Grigoriev I."/>
            <person name="Groza M."/>
            <person name="Hammon N."/>
            <person name="Hawkins T."/>
            <person name="Haydu L."/>
            <person name="Israni S."/>
            <person name="Jett J."/>
            <person name="Kadner K."/>
            <person name="Kimball H."/>
            <person name="Kobayashi A."/>
            <person name="Lopez F."/>
            <person name="Lou Y."/>
            <person name="Martinez D."/>
            <person name="Medina C."/>
            <person name="Morgan J."/>
            <person name="Nandkeshwar R."/>
            <person name="Noonan J.P."/>
            <person name="Pitluck S."/>
            <person name="Pollard M."/>
            <person name="Predki P."/>
            <person name="Priest J."/>
            <person name="Ramirez L."/>
            <person name="Retterer J."/>
            <person name="Rodriguez A."/>
            <person name="Rogers S."/>
            <person name="Salamov A."/>
            <person name="Salazar A."/>
            <person name="Thayer N."/>
            <person name="Tice H."/>
            <person name="Tsai M."/>
            <person name="Ustaszewska A."/>
            <person name="Vo N."/>
            <person name="Wheeler J."/>
            <person name="Wu K."/>
            <person name="Yang J."/>
            <person name="Dickson M."/>
            <person name="Cheng J.-F."/>
            <person name="Eichler E.E."/>
            <person name="Olsen A."/>
            <person name="Pennacchio L.A."/>
            <person name="Rokhsar D.S."/>
            <person name="Richardson P."/>
            <person name="Lucas S.M."/>
            <person name="Myers R.M."/>
            <person name="Rubin E.M."/>
        </authorList>
    </citation>
    <scope>NUCLEOTIDE SEQUENCE [LARGE SCALE GENOMIC DNA]</scope>
</reference>
<reference key="2">
    <citation type="journal article" date="2004" name="Genome Res.">
        <title>The status, quality, and expansion of the NIH full-length cDNA project: the Mammalian Gene Collection (MGC).</title>
        <authorList>
            <consortium name="The MGC Project Team"/>
        </authorList>
    </citation>
    <scope>NUCLEOTIDE SEQUENCE [LARGE SCALE MRNA]</scope>
</reference>
<comment type="subcellular location">
    <subcellularLocation>
        <location evidence="1">Membrane</location>
        <topology evidence="1">Single-pass membrane protein</topology>
    </subcellularLocation>
</comment>
<dbReference type="EMBL" id="AC009014">
    <property type="status" value="NOT_ANNOTATED_CDS"/>
    <property type="molecule type" value="Genomic_DNA"/>
</dbReference>
<dbReference type="EMBL" id="BC073887">
    <property type="status" value="NOT_ANNOTATED_CDS"/>
    <property type="molecule type" value="mRNA"/>
</dbReference>
<dbReference type="CCDS" id="CCDS87324.1"/>
<dbReference type="RefSeq" id="NP_001337923.1">
    <property type="nucleotide sequence ID" value="NM_001350994.2"/>
</dbReference>
<dbReference type="BioMuta" id="ENSG00000271824"/>
<dbReference type="PeptideAtlas" id="A0A1B0GUA5"/>
<dbReference type="Ensembl" id="ENST00000607574.2">
    <property type="protein sequence ID" value="ENSP00000490028.1"/>
    <property type="gene ID" value="ENSG00000271824.2"/>
</dbReference>
<dbReference type="GeneID" id="389332"/>
<dbReference type="MANE-Select" id="ENST00000607574.2">
    <property type="protein sequence ID" value="ENSP00000490028.1"/>
    <property type="RefSeq nucleotide sequence ID" value="NM_001350994.2"/>
    <property type="RefSeq protein sequence ID" value="NP_001337923.1"/>
</dbReference>
<dbReference type="AGR" id="HGNC:53640"/>
<dbReference type="GeneCards" id="SMIM32"/>
<dbReference type="HGNC" id="HGNC:53640">
    <property type="gene designation" value="SMIM32"/>
</dbReference>
<dbReference type="HPA" id="ENSG00000271824">
    <property type="expression patterns" value="Group enriched (intestine, kidney)"/>
</dbReference>
<dbReference type="neXtProt" id="NX_A0A1B0GUA5"/>
<dbReference type="OpenTargets" id="ENSG00000271824"/>
<dbReference type="VEuPathDB" id="HostDB:ENSG00000271824"/>
<dbReference type="GeneTree" id="ENSGT00950000183227"/>
<dbReference type="InParanoid" id="A0A1B0GUA5"/>
<dbReference type="OMA" id="YMSTARA"/>
<dbReference type="OrthoDB" id="8829929at2759"/>
<dbReference type="PAN-GO" id="A0A1B0GUA5">
    <property type="GO annotations" value="0 GO annotations based on evolutionary models"/>
</dbReference>
<dbReference type="Pharos" id="A0A1B0GUA5">
    <property type="development level" value="Tdark"/>
</dbReference>
<dbReference type="PRO" id="PR:A0A1B0GUA5"/>
<dbReference type="Proteomes" id="UP000005640">
    <property type="component" value="Chromosome 5"/>
</dbReference>
<dbReference type="RNAct" id="A0A1B0GUA5">
    <property type="molecule type" value="protein"/>
</dbReference>
<dbReference type="Bgee" id="ENSG00000271824">
    <property type="expression patterns" value="Expressed in kidney epithelium and 74 other cell types or tissues"/>
</dbReference>
<dbReference type="GO" id="GO:0016020">
    <property type="term" value="C:membrane"/>
    <property type="evidence" value="ECO:0007669"/>
    <property type="project" value="UniProtKB-SubCell"/>
</dbReference>
<gene>
    <name evidence="3" type="primary">SMIM32</name>
</gene>
<accession>A0A1B0GUA5</accession>
<sequence>MYGDIFNATGGPEAAVGSALAPGATVKAEGALPLELATARGMRDGAATKPDLPTYLLLFFLLLLSVALVVLFIGCQLRHSAFAALPHDRSLRDARAPWKTRPV</sequence>